<reference key="1">
    <citation type="journal article" date="2009" name="J. Bacteriol.">
        <title>Complete genome sequence of the extremophilic Bacillus cereus strain Q1 with industrial applications.</title>
        <authorList>
            <person name="Xiong Z."/>
            <person name="Jiang Y."/>
            <person name="Qi D."/>
            <person name="Lu H."/>
            <person name="Yang F."/>
            <person name="Yang J."/>
            <person name="Chen L."/>
            <person name="Sun L."/>
            <person name="Xu X."/>
            <person name="Xue Y."/>
            <person name="Zhu Y."/>
            <person name="Jin Q."/>
        </authorList>
    </citation>
    <scope>NUCLEOTIDE SEQUENCE [LARGE SCALE GENOMIC DNA]</scope>
    <source>
        <strain>Q1</strain>
    </source>
</reference>
<protein>
    <recommendedName>
        <fullName evidence="1">4-diphosphocytidyl-2-C-methyl-D-erythritol kinase</fullName>
        <shortName evidence="1">CMK</shortName>
        <ecNumber evidence="1">2.7.1.148</ecNumber>
    </recommendedName>
    <alternativeName>
        <fullName evidence="1">4-(cytidine-5'-diphospho)-2-C-methyl-D-erythritol kinase</fullName>
    </alternativeName>
</protein>
<evidence type="ECO:0000255" key="1">
    <source>
        <dbReference type="HAMAP-Rule" id="MF_00061"/>
    </source>
</evidence>
<comment type="function">
    <text evidence="1">Catalyzes the phosphorylation of the position 2 hydroxy group of 4-diphosphocytidyl-2C-methyl-D-erythritol.</text>
</comment>
<comment type="catalytic activity">
    <reaction evidence="1">
        <text>4-CDP-2-C-methyl-D-erythritol + ATP = 4-CDP-2-C-methyl-D-erythritol 2-phosphate + ADP + H(+)</text>
        <dbReference type="Rhea" id="RHEA:18437"/>
        <dbReference type="ChEBI" id="CHEBI:15378"/>
        <dbReference type="ChEBI" id="CHEBI:30616"/>
        <dbReference type="ChEBI" id="CHEBI:57823"/>
        <dbReference type="ChEBI" id="CHEBI:57919"/>
        <dbReference type="ChEBI" id="CHEBI:456216"/>
        <dbReference type="EC" id="2.7.1.148"/>
    </reaction>
</comment>
<comment type="pathway">
    <text evidence="1">Isoprenoid biosynthesis; isopentenyl diphosphate biosynthesis via DXP pathway; isopentenyl diphosphate from 1-deoxy-D-xylulose 5-phosphate: step 3/6.</text>
</comment>
<comment type="similarity">
    <text evidence="1">Belongs to the GHMP kinase family. IspE subfamily.</text>
</comment>
<proteinExistence type="inferred from homology"/>
<organism>
    <name type="scientific">Bacillus cereus (strain Q1)</name>
    <dbReference type="NCBI Taxonomy" id="361100"/>
    <lineage>
        <taxon>Bacteria</taxon>
        <taxon>Bacillati</taxon>
        <taxon>Bacillota</taxon>
        <taxon>Bacilli</taxon>
        <taxon>Bacillales</taxon>
        <taxon>Bacillaceae</taxon>
        <taxon>Bacillus</taxon>
        <taxon>Bacillus cereus group</taxon>
    </lineage>
</organism>
<keyword id="KW-0067">ATP-binding</keyword>
<keyword id="KW-0414">Isoprene biosynthesis</keyword>
<keyword id="KW-0418">Kinase</keyword>
<keyword id="KW-0547">Nucleotide-binding</keyword>
<keyword id="KW-0808">Transferase</keyword>
<accession>B9IZC8</accession>
<name>ISPE_BACCQ</name>
<feature type="chain" id="PRO_1000190676" description="4-diphosphocytidyl-2-C-methyl-D-erythritol kinase">
    <location>
        <begin position="1"/>
        <end position="292"/>
    </location>
</feature>
<feature type="active site" evidence="1">
    <location>
        <position position="13"/>
    </location>
</feature>
<feature type="active site" evidence="1">
    <location>
        <position position="139"/>
    </location>
</feature>
<feature type="binding site" evidence="1">
    <location>
        <begin position="97"/>
        <end position="107"/>
    </location>
    <ligand>
        <name>ATP</name>
        <dbReference type="ChEBI" id="CHEBI:30616"/>
    </ligand>
</feature>
<dbReference type="EC" id="2.7.1.148" evidence="1"/>
<dbReference type="EMBL" id="CP000227">
    <property type="protein sequence ID" value="ACM10572.1"/>
    <property type="molecule type" value="Genomic_DNA"/>
</dbReference>
<dbReference type="SMR" id="B9IZC8"/>
<dbReference type="KEGG" id="bcq:BCQ_0052"/>
<dbReference type="HOGENOM" id="CLU_053057_1_1_9"/>
<dbReference type="UniPathway" id="UPA00056">
    <property type="reaction ID" value="UER00094"/>
</dbReference>
<dbReference type="Proteomes" id="UP000000441">
    <property type="component" value="Chromosome"/>
</dbReference>
<dbReference type="GO" id="GO:0050515">
    <property type="term" value="F:4-(cytidine 5'-diphospho)-2-C-methyl-D-erythritol kinase activity"/>
    <property type="evidence" value="ECO:0007669"/>
    <property type="project" value="UniProtKB-UniRule"/>
</dbReference>
<dbReference type="GO" id="GO:0005524">
    <property type="term" value="F:ATP binding"/>
    <property type="evidence" value="ECO:0007669"/>
    <property type="project" value="UniProtKB-UniRule"/>
</dbReference>
<dbReference type="GO" id="GO:0019288">
    <property type="term" value="P:isopentenyl diphosphate biosynthetic process, methylerythritol 4-phosphate pathway"/>
    <property type="evidence" value="ECO:0007669"/>
    <property type="project" value="UniProtKB-UniRule"/>
</dbReference>
<dbReference type="GO" id="GO:0016114">
    <property type="term" value="P:terpenoid biosynthetic process"/>
    <property type="evidence" value="ECO:0007669"/>
    <property type="project" value="InterPro"/>
</dbReference>
<dbReference type="FunFam" id="3.30.230.10:FF:000029">
    <property type="entry name" value="4-diphosphocytidyl-2-C-methyl-D-erythritol kinase"/>
    <property type="match status" value="1"/>
</dbReference>
<dbReference type="FunFam" id="3.30.70.890:FF:000006">
    <property type="entry name" value="4-diphosphocytidyl-2-C-methyl-D-erythritol kinase"/>
    <property type="match status" value="1"/>
</dbReference>
<dbReference type="Gene3D" id="3.30.230.10">
    <property type="match status" value="1"/>
</dbReference>
<dbReference type="Gene3D" id="3.30.70.890">
    <property type="entry name" value="GHMP kinase, C-terminal domain"/>
    <property type="match status" value="1"/>
</dbReference>
<dbReference type="HAMAP" id="MF_00061">
    <property type="entry name" value="IspE"/>
    <property type="match status" value="1"/>
</dbReference>
<dbReference type="InterPro" id="IPR013750">
    <property type="entry name" value="GHMP_kinase_C_dom"/>
</dbReference>
<dbReference type="InterPro" id="IPR036554">
    <property type="entry name" value="GHMP_kinase_C_sf"/>
</dbReference>
<dbReference type="InterPro" id="IPR006204">
    <property type="entry name" value="GHMP_kinase_N_dom"/>
</dbReference>
<dbReference type="InterPro" id="IPR004424">
    <property type="entry name" value="IspE"/>
</dbReference>
<dbReference type="InterPro" id="IPR020568">
    <property type="entry name" value="Ribosomal_Su5_D2-typ_SF"/>
</dbReference>
<dbReference type="InterPro" id="IPR014721">
    <property type="entry name" value="Ribsml_uS5_D2-typ_fold_subgr"/>
</dbReference>
<dbReference type="NCBIfam" id="TIGR00154">
    <property type="entry name" value="ispE"/>
    <property type="match status" value="1"/>
</dbReference>
<dbReference type="NCBIfam" id="NF011202">
    <property type="entry name" value="PRK14608.1"/>
    <property type="match status" value="1"/>
</dbReference>
<dbReference type="PANTHER" id="PTHR43527">
    <property type="entry name" value="4-DIPHOSPHOCYTIDYL-2-C-METHYL-D-ERYTHRITOL KINASE, CHLOROPLASTIC"/>
    <property type="match status" value="1"/>
</dbReference>
<dbReference type="PANTHER" id="PTHR43527:SF2">
    <property type="entry name" value="4-DIPHOSPHOCYTIDYL-2-C-METHYL-D-ERYTHRITOL KINASE, CHLOROPLASTIC"/>
    <property type="match status" value="1"/>
</dbReference>
<dbReference type="Pfam" id="PF08544">
    <property type="entry name" value="GHMP_kinases_C"/>
    <property type="match status" value="1"/>
</dbReference>
<dbReference type="Pfam" id="PF00288">
    <property type="entry name" value="GHMP_kinases_N"/>
    <property type="match status" value="1"/>
</dbReference>
<dbReference type="PIRSF" id="PIRSF010376">
    <property type="entry name" value="IspE"/>
    <property type="match status" value="1"/>
</dbReference>
<dbReference type="SUPFAM" id="SSF55060">
    <property type="entry name" value="GHMP Kinase, C-terminal domain"/>
    <property type="match status" value="1"/>
</dbReference>
<dbReference type="SUPFAM" id="SSF54211">
    <property type="entry name" value="Ribosomal protein S5 domain 2-like"/>
    <property type="match status" value="1"/>
</dbReference>
<gene>
    <name evidence="1" type="primary">ispE</name>
    <name type="ordered locus">BCQ_0052</name>
</gene>
<sequence>MNRLKLLVKAPAKINLSLDVLGKRQDGYHEVKMIMTTIDLADRLELMELAEDRIEILSHNRYVPDDQRNLAYQAAKLLKEKFNVKKGVSITIEKTIPVAAGLAGGSSDAAATLRGLNKLWNLGLTIDQLAELGAEIGSDVSFCVYGGTAIATGRGEQIEHIKTPPSCWVILAKPHIGVSTADVYGNLKLNRVTHPNVDKMVDVINAGDYKGICDTVGNVLEDVTFAMHPEVARIKAQMKRFGADAVLMSGSGPTVFGLVHHDSRMHRIYNGLKGFCEQVYAVRLLGERETLE</sequence>